<feature type="chain" id="PRO_0000075759" description="Insulin gene enhancer protein isl-2b">
    <location>
        <begin position="1"/>
        <end position="358"/>
    </location>
</feature>
<feature type="domain" description="LIM zinc-binding 1" evidence="2">
    <location>
        <begin position="27"/>
        <end position="80"/>
    </location>
</feature>
<feature type="domain" description="LIM zinc-binding 2" evidence="2">
    <location>
        <begin position="89"/>
        <end position="143"/>
    </location>
</feature>
<feature type="DNA-binding region" description="Homeobox" evidence="1">
    <location>
        <begin position="191"/>
        <end position="250"/>
    </location>
</feature>
<feature type="region of interest" description="Disordered" evidence="3">
    <location>
        <begin position="325"/>
        <end position="358"/>
    </location>
</feature>
<feature type="compositionally biased region" description="Low complexity" evidence="3">
    <location>
        <begin position="325"/>
        <end position="335"/>
    </location>
</feature>
<feature type="compositionally biased region" description="Polar residues" evidence="3">
    <location>
        <begin position="336"/>
        <end position="358"/>
    </location>
</feature>
<sequence length="358" mass="39848">MVDIIFSSSFLDDMGDHSKKKSGLAMCVGCGSQIHDQYILRVSPDLEWHAACLKCVECNQYLDETCTCFVRDGKTYCKRDYVRLFGIKCAKCTLGFSSSDLVMRARDSVYHIECFRCSVCSRQLLPGDEFSVRDEELLCRADHGLALERGPGGSPLSPGNIHTRGLHMAADPVSVRQTPHRNHVHKQSEKTTRVRTVLNEKQLHTLRTCYNANPRPDALMKEQLVEMTGLSPRVIRVWFQNKRCKDKKRSILMKQLQQQHGDKTNLQGMTGTALVAGSPIRHNPSVPGHPVDVQAYQPPWKALSEFALQSDLDQPAFQQLVSFSESGSLGNSSGSDVTSLSSQLPDTPNSMVPSPVET</sequence>
<organism>
    <name type="scientific">Danio rerio</name>
    <name type="common">Zebrafish</name>
    <name type="synonym">Brachydanio rerio</name>
    <dbReference type="NCBI Taxonomy" id="7955"/>
    <lineage>
        <taxon>Eukaryota</taxon>
        <taxon>Metazoa</taxon>
        <taxon>Chordata</taxon>
        <taxon>Craniata</taxon>
        <taxon>Vertebrata</taxon>
        <taxon>Euteleostomi</taxon>
        <taxon>Actinopterygii</taxon>
        <taxon>Neopterygii</taxon>
        <taxon>Teleostei</taxon>
        <taxon>Ostariophysi</taxon>
        <taxon>Cypriniformes</taxon>
        <taxon>Danionidae</taxon>
        <taxon>Danioninae</taxon>
        <taxon>Danio</taxon>
    </lineage>
</organism>
<keyword id="KW-0217">Developmental protein</keyword>
<keyword id="KW-0238">DNA-binding</keyword>
<keyword id="KW-0371">Homeobox</keyword>
<keyword id="KW-0440">LIM domain</keyword>
<keyword id="KW-0479">Metal-binding</keyword>
<keyword id="KW-0539">Nucleus</keyword>
<keyword id="KW-1185">Reference proteome</keyword>
<keyword id="KW-0677">Repeat</keyword>
<keyword id="KW-0862">Zinc</keyword>
<proteinExistence type="evidence at transcript level"/>
<evidence type="ECO:0000255" key="1">
    <source>
        <dbReference type="PROSITE-ProRule" id="PRU00108"/>
    </source>
</evidence>
<evidence type="ECO:0000255" key="2">
    <source>
        <dbReference type="PROSITE-ProRule" id="PRU00125"/>
    </source>
</evidence>
<evidence type="ECO:0000256" key="3">
    <source>
        <dbReference type="SAM" id="MobiDB-lite"/>
    </source>
</evidence>
<evidence type="ECO:0000269" key="4">
    <source>
    </source>
</evidence>
<reference key="1">
    <citation type="journal article" date="1995" name="Dev. Biol.">
        <title>Molecular heterogeneity among primary motoneurons and within myotomes revealed by the differential mRNA expression of novel islet-1 homologs in embryonic zebrafish.</title>
        <authorList>
            <person name="Tokumoto M."/>
            <person name="Gong Z."/>
            <person name="Tsubokawa T."/>
            <person name="Hew C.-L."/>
            <person name="Uyemura K."/>
            <person name="Hotta Y."/>
            <person name="Okamoto H."/>
        </authorList>
    </citation>
    <scope>NUCLEOTIDE SEQUENCE [MRNA]</scope>
    <scope>DEVELOPMENTAL STAGE</scope>
    <source>
        <tissue>Embryo</tissue>
    </source>
</reference>
<reference key="2">
    <citation type="journal article" date="2013" name="Nature">
        <title>The zebrafish reference genome sequence and its relationship to the human genome.</title>
        <authorList>
            <person name="Howe K."/>
            <person name="Clark M.D."/>
            <person name="Torroja C.F."/>
            <person name="Torrance J."/>
            <person name="Berthelot C."/>
            <person name="Muffato M."/>
            <person name="Collins J.E."/>
            <person name="Humphray S."/>
            <person name="McLaren K."/>
            <person name="Matthews L."/>
            <person name="McLaren S."/>
            <person name="Sealy I."/>
            <person name="Caccamo M."/>
            <person name="Churcher C."/>
            <person name="Scott C."/>
            <person name="Barrett J.C."/>
            <person name="Koch R."/>
            <person name="Rauch G.J."/>
            <person name="White S."/>
            <person name="Chow W."/>
            <person name="Kilian B."/>
            <person name="Quintais L.T."/>
            <person name="Guerra-Assuncao J.A."/>
            <person name="Zhou Y."/>
            <person name="Gu Y."/>
            <person name="Yen J."/>
            <person name="Vogel J.H."/>
            <person name="Eyre T."/>
            <person name="Redmond S."/>
            <person name="Banerjee R."/>
            <person name="Chi J."/>
            <person name="Fu B."/>
            <person name="Langley E."/>
            <person name="Maguire S.F."/>
            <person name="Laird G.K."/>
            <person name="Lloyd D."/>
            <person name="Kenyon E."/>
            <person name="Donaldson S."/>
            <person name="Sehra H."/>
            <person name="Almeida-King J."/>
            <person name="Loveland J."/>
            <person name="Trevanion S."/>
            <person name="Jones M."/>
            <person name="Quail M."/>
            <person name="Willey D."/>
            <person name="Hunt A."/>
            <person name="Burton J."/>
            <person name="Sims S."/>
            <person name="McLay K."/>
            <person name="Plumb B."/>
            <person name="Davis J."/>
            <person name="Clee C."/>
            <person name="Oliver K."/>
            <person name="Clark R."/>
            <person name="Riddle C."/>
            <person name="Elliot D."/>
            <person name="Threadgold G."/>
            <person name="Harden G."/>
            <person name="Ware D."/>
            <person name="Begum S."/>
            <person name="Mortimore B."/>
            <person name="Kerry G."/>
            <person name="Heath P."/>
            <person name="Phillimore B."/>
            <person name="Tracey A."/>
            <person name="Corby N."/>
            <person name="Dunn M."/>
            <person name="Johnson C."/>
            <person name="Wood J."/>
            <person name="Clark S."/>
            <person name="Pelan S."/>
            <person name="Griffiths G."/>
            <person name="Smith M."/>
            <person name="Glithero R."/>
            <person name="Howden P."/>
            <person name="Barker N."/>
            <person name="Lloyd C."/>
            <person name="Stevens C."/>
            <person name="Harley J."/>
            <person name="Holt K."/>
            <person name="Panagiotidis G."/>
            <person name="Lovell J."/>
            <person name="Beasley H."/>
            <person name="Henderson C."/>
            <person name="Gordon D."/>
            <person name="Auger K."/>
            <person name="Wright D."/>
            <person name="Collins J."/>
            <person name="Raisen C."/>
            <person name="Dyer L."/>
            <person name="Leung K."/>
            <person name="Robertson L."/>
            <person name="Ambridge K."/>
            <person name="Leongamornlert D."/>
            <person name="McGuire S."/>
            <person name="Gilderthorp R."/>
            <person name="Griffiths C."/>
            <person name="Manthravadi D."/>
            <person name="Nichol S."/>
            <person name="Barker G."/>
            <person name="Whitehead S."/>
            <person name="Kay M."/>
            <person name="Brown J."/>
            <person name="Murnane C."/>
            <person name="Gray E."/>
            <person name="Humphries M."/>
            <person name="Sycamore N."/>
            <person name="Barker D."/>
            <person name="Saunders D."/>
            <person name="Wallis J."/>
            <person name="Babbage A."/>
            <person name="Hammond S."/>
            <person name="Mashreghi-Mohammadi M."/>
            <person name="Barr L."/>
            <person name="Martin S."/>
            <person name="Wray P."/>
            <person name="Ellington A."/>
            <person name="Matthews N."/>
            <person name="Ellwood M."/>
            <person name="Woodmansey R."/>
            <person name="Clark G."/>
            <person name="Cooper J."/>
            <person name="Tromans A."/>
            <person name="Grafham D."/>
            <person name="Skuce C."/>
            <person name="Pandian R."/>
            <person name="Andrews R."/>
            <person name="Harrison E."/>
            <person name="Kimberley A."/>
            <person name="Garnett J."/>
            <person name="Fosker N."/>
            <person name="Hall R."/>
            <person name="Garner P."/>
            <person name="Kelly D."/>
            <person name="Bird C."/>
            <person name="Palmer S."/>
            <person name="Gehring I."/>
            <person name="Berger A."/>
            <person name="Dooley C.M."/>
            <person name="Ersan-Urun Z."/>
            <person name="Eser C."/>
            <person name="Geiger H."/>
            <person name="Geisler M."/>
            <person name="Karotki L."/>
            <person name="Kirn A."/>
            <person name="Konantz J."/>
            <person name="Konantz M."/>
            <person name="Oberlander M."/>
            <person name="Rudolph-Geiger S."/>
            <person name="Teucke M."/>
            <person name="Lanz C."/>
            <person name="Raddatz G."/>
            <person name="Osoegawa K."/>
            <person name="Zhu B."/>
            <person name="Rapp A."/>
            <person name="Widaa S."/>
            <person name="Langford C."/>
            <person name="Yang F."/>
            <person name="Schuster S.C."/>
            <person name="Carter N.P."/>
            <person name="Harrow J."/>
            <person name="Ning Z."/>
            <person name="Herrero J."/>
            <person name="Searle S.M."/>
            <person name="Enright A."/>
            <person name="Geisler R."/>
            <person name="Plasterk R.H."/>
            <person name="Lee C."/>
            <person name="Westerfield M."/>
            <person name="de Jong P.J."/>
            <person name="Zon L.I."/>
            <person name="Postlethwait J.H."/>
            <person name="Nusslein-Volhard C."/>
            <person name="Hubbard T.J."/>
            <person name="Roest Crollius H."/>
            <person name="Rogers J."/>
            <person name="Stemple D.L."/>
        </authorList>
    </citation>
    <scope>NUCLEOTIDE SEQUENCE [LARGE SCALE GENOMIC DNA]</scope>
    <source>
        <strain>Tuebingen</strain>
    </source>
</reference>
<reference key="3">
    <citation type="submission" date="2005-05" db="EMBL/GenBank/DDBJ databases">
        <authorList>
            <consortium name="NIH - Zebrafish Gene Collection (ZGC) project"/>
        </authorList>
    </citation>
    <scope>NUCLEOTIDE SEQUENCE [LARGE SCALE MRNA]</scope>
    <source>
        <tissue>Eye</tissue>
    </source>
</reference>
<reference key="4">
    <citation type="journal article" date="1995" name="J. Biol. Chem.">
        <title>Presence of isl-1-related LIM domain homeobox genes in teleost and their similar patterns of expression in brain and spinal cord.</title>
        <authorList>
            <person name="Gong Z."/>
            <person name="Hui C.-C."/>
            <person name="Hew C.-L."/>
        </authorList>
    </citation>
    <scope>NUCLEOTIDE SEQUENCE [MRNA] OF 71-237</scope>
    <source>
        <tissue>Embryo</tissue>
    </source>
</reference>
<accession>P53407</accession>
<accession>Q504I1</accession>
<accession>Q6LD05</accession>
<comment type="function">
    <text>Binds to one of the cis-acting domain of the insulin gene enhancer. May be involved in the regional specification of the myotome and also in target recognition by the caudal primary neuron.</text>
</comment>
<comment type="subcellular location">
    <subcellularLocation>
        <location>Nucleus</location>
    </subcellularLocation>
</comment>
<comment type="developmental stage">
    <text evidence="4">Expressed both maternally and zygotically. At 17 hours post-fertilization (hpf), expressed in dorsal Rohan-Beard neurons and strongly in the ventral myotomes. At 24 hpf, head expression is restricted to eyes, the tectal region of the midbrain, trigeminal ganglia and the ganglia anterior to the otic vesicles.</text>
</comment>
<name>ISL2B_DANRE</name>
<protein>
    <recommendedName>
        <fullName>Insulin gene enhancer protein isl-2b</fullName>
        <shortName>Islet-2B</shortName>
    </recommendedName>
    <alternativeName>
        <fullName>Insulin gene enhancer protein isl-3</fullName>
        <shortName>Islet-3</shortName>
    </alternativeName>
</protein>
<dbReference type="EMBL" id="D38454">
    <property type="protein sequence ID" value="BAA07485.1"/>
    <property type="molecule type" value="mRNA"/>
</dbReference>
<dbReference type="EMBL" id="AL845510">
    <property type="protein sequence ID" value="CAI11499.1"/>
    <property type="molecule type" value="Genomic_DNA"/>
</dbReference>
<dbReference type="EMBL" id="BC095011">
    <property type="protein sequence ID" value="AAH95011.1"/>
    <property type="molecule type" value="mRNA"/>
</dbReference>
<dbReference type="EMBL" id="U09404">
    <property type="protein sequence ID" value="AAA80275.1"/>
    <property type="molecule type" value="mRNA"/>
</dbReference>
<dbReference type="PIR" id="I51735">
    <property type="entry name" value="I51735"/>
</dbReference>
<dbReference type="RefSeq" id="NP_571039.1">
    <property type="nucleotide sequence ID" value="NM_130964.2"/>
</dbReference>
<dbReference type="BMRB" id="P53407"/>
<dbReference type="SMR" id="P53407"/>
<dbReference type="FunCoup" id="P53407">
    <property type="interactions" value="44"/>
</dbReference>
<dbReference type="STRING" id="7955.ENSDARP00000055935"/>
<dbReference type="PaxDb" id="7955-ENSDARP00000055935"/>
<dbReference type="Ensembl" id="ENSDART00000055936">
    <property type="protein sequence ID" value="ENSDARP00000055935"/>
    <property type="gene ID" value="ENSDARG00000053499"/>
</dbReference>
<dbReference type="GeneID" id="30151"/>
<dbReference type="KEGG" id="dre:30151"/>
<dbReference type="AGR" id="ZFIN:ZDB-GENE-990415-133"/>
<dbReference type="CTD" id="30151"/>
<dbReference type="ZFIN" id="ZDB-GENE-990415-133">
    <property type="gene designation" value="isl2b"/>
</dbReference>
<dbReference type="eggNOG" id="KOG0490">
    <property type="taxonomic scope" value="Eukaryota"/>
</dbReference>
<dbReference type="HOGENOM" id="CLU_027802_2_0_1"/>
<dbReference type="InParanoid" id="P53407"/>
<dbReference type="OMA" id="PQNNGFH"/>
<dbReference type="OrthoDB" id="125004at2759"/>
<dbReference type="PhylomeDB" id="P53407"/>
<dbReference type="TreeFam" id="TF315442"/>
<dbReference type="PRO" id="PR:P53407"/>
<dbReference type="Proteomes" id="UP000000437">
    <property type="component" value="Chromosome 7"/>
</dbReference>
<dbReference type="Bgee" id="ENSDARG00000053499">
    <property type="expression patterns" value="Expressed in camera-type eye and 25 other cell types or tissues"/>
</dbReference>
<dbReference type="GO" id="GO:0005634">
    <property type="term" value="C:nucleus"/>
    <property type="evidence" value="ECO:0000318"/>
    <property type="project" value="GO_Central"/>
</dbReference>
<dbReference type="GO" id="GO:0000987">
    <property type="term" value="F:cis-regulatory region sequence-specific DNA binding"/>
    <property type="evidence" value="ECO:0000318"/>
    <property type="project" value="GO_Central"/>
</dbReference>
<dbReference type="GO" id="GO:0000981">
    <property type="term" value="F:DNA-binding transcription factor activity, RNA polymerase II-specific"/>
    <property type="evidence" value="ECO:0000318"/>
    <property type="project" value="GO_Central"/>
</dbReference>
<dbReference type="GO" id="GO:0046872">
    <property type="term" value="F:metal ion binding"/>
    <property type="evidence" value="ECO:0007669"/>
    <property type="project" value="UniProtKB-KW"/>
</dbReference>
<dbReference type="GO" id="GO:0007409">
    <property type="term" value="P:axonogenesis"/>
    <property type="evidence" value="ECO:0000318"/>
    <property type="project" value="GO_Central"/>
</dbReference>
<dbReference type="GO" id="GO:0031017">
    <property type="term" value="P:exocrine pancreas development"/>
    <property type="evidence" value="ECO:0000316"/>
    <property type="project" value="ZFIN"/>
</dbReference>
<dbReference type="GO" id="GO:0048665">
    <property type="term" value="P:neuron fate specification"/>
    <property type="evidence" value="ECO:0000318"/>
    <property type="project" value="GO_Central"/>
</dbReference>
<dbReference type="GO" id="GO:0045944">
    <property type="term" value="P:positive regulation of transcription by RNA polymerase II"/>
    <property type="evidence" value="ECO:0000318"/>
    <property type="project" value="GO_Central"/>
</dbReference>
<dbReference type="GO" id="GO:0003139">
    <property type="term" value="P:secondary heart field specification"/>
    <property type="evidence" value="ECO:0000315"/>
    <property type="project" value="ZFIN"/>
</dbReference>
<dbReference type="CDD" id="cd00086">
    <property type="entry name" value="homeodomain"/>
    <property type="match status" value="1"/>
</dbReference>
<dbReference type="CDD" id="cd09366">
    <property type="entry name" value="LIM1_Isl"/>
    <property type="match status" value="1"/>
</dbReference>
<dbReference type="CDD" id="cd09471">
    <property type="entry name" value="LIM2_Isl2"/>
    <property type="match status" value="1"/>
</dbReference>
<dbReference type="FunFam" id="2.10.110.10:FF:000034">
    <property type="entry name" value="Insulin gene enhancer protein ISL"/>
    <property type="match status" value="1"/>
</dbReference>
<dbReference type="FunFam" id="1.10.10.60:FF:000041">
    <property type="entry name" value="insulin gene enhancer protein ISL-1"/>
    <property type="match status" value="1"/>
</dbReference>
<dbReference type="FunFam" id="2.10.110.10:FF:000068">
    <property type="entry name" value="Insulin gene enhancer protein ISL-2"/>
    <property type="match status" value="1"/>
</dbReference>
<dbReference type="Gene3D" id="2.10.110.10">
    <property type="entry name" value="Cysteine Rich Protein"/>
    <property type="match status" value="2"/>
</dbReference>
<dbReference type="Gene3D" id="1.10.10.60">
    <property type="entry name" value="Homeodomain-like"/>
    <property type="match status" value="1"/>
</dbReference>
<dbReference type="InterPro" id="IPR001356">
    <property type="entry name" value="HD"/>
</dbReference>
<dbReference type="InterPro" id="IPR017970">
    <property type="entry name" value="Homeobox_CS"/>
</dbReference>
<dbReference type="InterPro" id="IPR009057">
    <property type="entry name" value="Homeodomain-like_sf"/>
</dbReference>
<dbReference type="InterPro" id="IPR047169">
    <property type="entry name" value="ISL1/2-like"/>
</dbReference>
<dbReference type="InterPro" id="IPR047244">
    <property type="entry name" value="ISL1/2-like_LIM1"/>
</dbReference>
<dbReference type="InterPro" id="IPR001781">
    <property type="entry name" value="Znf_LIM"/>
</dbReference>
<dbReference type="PANTHER" id="PTHR24204">
    <property type="entry name" value="INSULIN GENE ENHANCER PROTEIN"/>
    <property type="match status" value="1"/>
</dbReference>
<dbReference type="PANTHER" id="PTHR24204:SF2">
    <property type="entry name" value="INSULIN GENE ENHANCER PROTEIN ISL-2"/>
    <property type="match status" value="1"/>
</dbReference>
<dbReference type="Pfam" id="PF00046">
    <property type="entry name" value="Homeodomain"/>
    <property type="match status" value="1"/>
</dbReference>
<dbReference type="Pfam" id="PF00412">
    <property type="entry name" value="LIM"/>
    <property type="match status" value="2"/>
</dbReference>
<dbReference type="SMART" id="SM00389">
    <property type="entry name" value="HOX"/>
    <property type="match status" value="1"/>
</dbReference>
<dbReference type="SMART" id="SM00132">
    <property type="entry name" value="LIM"/>
    <property type="match status" value="2"/>
</dbReference>
<dbReference type="SUPFAM" id="SSF57716">
    <property type="entry name" value="Glucocorticoid receptor-like (DNA-binding domain)"/>
    <property type="match status" value="2"/>
</dbReference>
<dbReference type="SUPFAM" id="SSF46689">
    <property type="entry name" value="Homeodomain-like"/>
    <property type="match status" value="1"/>
</dbReference>
<dbReference type="PROSITE" id="PS00027">
    <property type="entry name" value="HOMEOBOX_1"/>
    <property type="match status" value="1"/>
</dbReference>
<dbReference type="PROSITE" id="PS50071">
    <property type="entry name" value="HOMEOBOX_2"/>
    <property type="match status" value="1"/>
</dbReference>
<dbReference type="PROSITE" id="PS00478">
    <property type="entry name" value="LIM_DOMAIN_1"/>
    <property type="match status" value="2"/>
</dbReference>
<dbReference type="PROSITE" id="PS50023">
    <property type="entry name" value="LIM_DOMAIN_2"/>
    <property type="match status" value="2"/>
</dbReference>
<gene>
    <name type="primary">isl2b</name>
    <name type="synonym">isl-3</name>
    <name type="synonym">isl3</name>
    <name type="ORF">zgc:109840</name>
</gene>